<feature type="chain" id="PRO_0000166562" description="GTP pyrophosphokinase">
    <location>
        <begin position="1"/>
        <end position="729"/>
    </location>
</feature>
<feature type="domain" description="HD" evidence="3">
    <location>
        <begin position="50"/>
        <end position="149"/>
    </location>
</feature>
<feature type="domain" description="TGS" evidence="4">
    <location>
        <begin position="393"/>
        <end position="454"/>
    </location>
</feature>
<feature type="domain" description="ACT" evidence="2">
    <location>
        <begin position="655"/>
        <end position="729"/>
    </location>
</feature>
<comment type="function">
    <text evidence="1">In eubacteria ppGpp (guanosine 3'-diphosphate 5'-diphosphate) is a mediator of the stringent response that coordinates a variety of cellular activities in response to changes in nutritional abundance. This enzyme catalyzes the formation of pppGpp which is then hydrolyzed to form ppGpp (By similarity).</text>
</comment>
<comment type="catalytic activity">
    <reaction>
        <text>GTP + ATP = guanosine 3'-diphosphate 5'-triphosphate + AMP</text>
        <dbReference type="Rhea" id="RHEA:22088"/>
        <dbReference type="ChEBI" id="CHEBI:30616"/>
        <dbReference type="ChEBI" id="CHEBI:37565"/>
        <dbReference type="ChEBI" id="CHEBI:142410"/>
        <dbReference type="ChEBI" id="CHEBI:456215"/>
        <dbReference type="EC" id="2.7.6.5"/>
    </reaction>
</comment>
<comment type="pathway">
    <text>Purine metabolism; ppGpp biosynthesis; ppGpp from GTP: step 1/2.</text>
</comment>
<comment type="similarity">
    <text evidence="5">Belongs to the RelA/SpoT family.</text>
</comment>
<proteinExistence type="inferred from homology"/>
<evidence type="ECO:0000250" key="1"/>
<evidence type="ECO:0000255" key="2">
    <source>
        <dbReference type="PROSITE-ProRule" id="PRU01007"/>
    </source>
</evidence>
<evidence type="ECO:0000255" key="3">
    <source>
        <dbReference type="PROSITE-ProRule" id="PRU01175"/>
    </source>
</evidence>
<evidence type="ECO:0000255" key="4">
    <source>
        <dbReference type="PROSITE-ProRule" id="PRU01228"/>
    </source>
</evidence>
<evidence type="ECO:0000305" key="5"/>
<protein>
    <recommendedName>
        <fullName>GTP pyrophosphokinase</fullName>
        <ecNumber>2.7.6.5</ecNumber>
    </recommendedName>
    <alternativeName>
        <fullName>(p)ppGpp synthase</fullName>
    </alternativeName>
    <alternativeName>
        <fullName>ATP:GTP 3'-pyrophosphotransferase</fullName>
    </alternativeName>
    <alternativeName>
        <fullName>ppGpp synthase I</fullName>
    </alternativeName>
</protein>
<name>RELA_STAEQ</name>
<gene>
    <name type="primary">relA</name>
    <name type="ordered locus">SERP1196</name>
</gene>
<accession>Q5HNR8</accession>
<keyword id="KW-0067">ATP-binding</keyword>
<keyword id="KW-0342">GTP-binding</keyword>
<keyword id="KW-0418">Kinase</keyword>
<keyword id="KW-0547">Nucleotide-binding</keyword>
<keyword id="KW-1185">Reference proteome</keyword>
<keyword id="KW-0808">Transferase</keyword>
<reference key="1">
    <citation type="journal article" date="2005" name="J. Bacteriol.">
        <title>Insights on evolution of virulence and resistance from the complete genome analysis of an early methicillin-resistant Staphylococcus aureus strain and a biofilm-producing methicillin-resistant Staphylococcus epidermidis strain.</title>
        <authorList>
            <person name="Gill S.R."/>
            <person name="Fouts D.E."/>
            <person name="Archer G.L."/>
            <person name="Mongodin E.F."/>
            <person name="DeBoy R.T."/>
            <person name="Ravel J."/>
            <person name="Paulsen I.T."/>
            <person name="Kolonay J.F."/>
            <person name="Brinkac L.M."/>
            <person name="Beanan M.J."/>
            <person name="Dodson R.J."/>
            <person name="Daugherty S.C."/>
            <person name="Madupu R."/>
            <person name="Angiuoli S.V."/>
            <person name="Durkin A.S."/>
            <person name="Haft D.H."/>
            <person name="Vamathevan J.J."/>
            <person name="Khouri H."/>
            <person name="Utterback T.R."/>
            <person name="Lee C."/>
            <person name="Dimitrov G."/>
            <person name="Jiang L."/>
            <person name="Qin H."/>
            <person name="Weidman J."/>
            <person name="Tran K."/>
            <person name="Kang K.H."/>
            <person name="Hance I.R."/>
            <person name="Nelson K.E."/>
            <person name="Fraser C.M."/>
        </authorList>
    </citation>
    <scope>NUCLEOTIDE SEQUENCE [LARGE SCALE GENOMIC DNA]</scope>
    <source>
        <strain>ATCC 35984 / DSM 28319 / BCRC 17069 / CCUG 31568 / BM 3577 / RP62A</strain>
    </source>
</reference>
<sequence length="729" mass="83468">MNNEYPYSADEVLYKAKSYLSTSEYEYVLKSYHIAYEAHKGQFRKNGLPYIMHPIQVAGILTEMRLDGPTIVAGFLHDVIEDTSYTFEDVKDMFNEEIARIVDGVTKLKKVKYRSKEEQQAENHRKLFIAIAKDVRVILVKLADRLHNMRTLKAMPREKQVRISKETLEIYAPLAHRLGINTIKWELEDTALRYIDSVQYFRIVNLMKKKRSEREAYITNAINKIKNEMTKMNLSGEINGRPKHIYSIYRKMIKQKKQFDQIFDLLAIRIIVNSINDCYATLGLVHTLWKPMPGRFKDYIAMPKQNMYQSLHTTVVGPNGDPLEIQIRTHEMHEIAEHGVAAHWAYKEGKTVNQKTQDFQNKLNWLKELAETDHTSADAQEFMESLKYDLQSDKVYAFTPASDVIELPYGAVPIDFAYAIHSEVGNKMIGAKVNGKIVPIDYVLQTGDIIEIRTSKHSYGPSRDWLKIVKSSSAKSKIKSFFKKQDRSSNIEKGKFMVEAEIKEQGFRVEDILTEKNLEVVNEKYHFANDEDLYAAVGFGGVTSIQIVNKLTERQRILDKQKALNEAQEVTKSVPIKKDITTDSGVYVEGLENVLIKLSKCCNPIPGDDIVGYITKGHGIKVHRTDCPNIKNETDRLISVEWVKSKDSTQQYQVDLEVTAYDRNGLLNEVLQAVNSTAGSLIKVSGRSDIDKNAVINISVMVKNVNDVYRVVEKIKQLGDVYTVSRVWN</sequence>
<dbReference type="EC" id="2.7.6.5"/>
<dbReference type="EMBL" id="CP000029">
    <property type="protein sequence ID" value="AAW54575.1"/>
    <property type="molecule type" value="Genomic_DNA"/>
</dbReference>
<dbReference type="RefSeq" id="WP_001832683.1">
    <property type="nucleotide sequence ID" value="NC_002976.3"/>
</dbReference>
<dbReference type="SMR" id="Q5HNR8"/>
<dbReference type="STRING" id="176279.SERP1196"/>
<dbReference type="KEGG" id="ser:SERP1196"/>
<dbReference type="eggNOG" id="COG0317">
    <property type="taxonomic scope" value="Bacteria"/>
</dbReference>
<dbReference type="HOGENOM" id="CLU_012300_3_0_9"/>
<dbReference type="UniPathway" id="UPA00908">
    <property type="reaction ID" value="UER00884"/>
</dbReference>
<dbReference type="Proteomes" id="UP000000531">
    <property type="component" value="Chromosome"/>
</dbReference>
<dbReference type="GO" id="GO:0005886">
    <property type="term" value="C:plasma membrane"/>
    <property type="evidence" value="ECO:0007669"/>
    <property type="project" value="TreeGrafter"/>
</dbReference>
<dbReference type="GO" id="GO:0005524">
    <property type="term" value="F:ATP binding"/>
    <property type="evidence" value="ECO:0007669"/>
    <property type="project" value="UniProtKB-KW"/>
</dbReference>
<dbReference type="GO" id="GO:0005525">
    <property type="term" value="F:GTP binding"/>
    <property type="evidence" value="ECO:0007669"/>
    <property type="project" value="UniProtKB-KW"/>
</dbReference>
<dbReference type="GO" id="GO:0008728">
    <property type="term" value="F:GTP diphosphokinase activity"/>
    <property type="evidence" value="ECO:0007669"/>
    <property type="project" value="UniProtKB-EC"/>
</dbReference>
<dbReference type="GO" id="GO:0016301">
    <property type="term" value="F:kinase activity"/>
    <property type="evidence" value="ECO:0007669"/>
    <property type="project" value="UniProtKB-KW"/>
</dbReference>
<dbReference type="GO" id="GO:0015970">
    <property type="term" value="P:guanosine tetraphosphate biosynthetic process"/>
    <property type="evidence" value="ECO:0007669"/>
    <property type="project" value="UniProtKB-UniPathway"/>
</dbReference>
<dbReference type="CDD" id="cd04876">
    <property type="entry name" value="ACT_RelA-SpoT"/>
    <property type="match status" value="1"/>
</dbReference>
<dbReference type="CDD" id="cd00077">
    <property type="entry name" value="HDc"/>
    <property type="match status" value="1"/>
</dbReference>
<dbReference type="CDD" id="cd05399">
    <property type="entry name" value="NT_Rel-Spo_like"/>
    <property type="match status" value="1"/>
</dbReference>
<dbReference type="CDD" id="cd01668">
    <property type="entry name" value="TGS_RSH"/>
    <property type="match status" value="1"/>
</dbReference>
<dbReference type="FunFam" id="3.10.20.30:FF:000002">
    <property type="entry name" value="GTP pyrophosphokinase (RelA/SpoT)"/>
    <property type="match status" value="1"/>
</dbReference>
<dbReference type="FunFam" id="1.10.3210.10:FF:000001">
    <property type="entry name" value="GTP pyrophosphokinase RelA"/>
    <property type="match status" value="1"/>
</dbReference>
<dbReference type="FunFam" id="3.30.460.10:FF:000001">
    <property type="entry name" value="GTP pyrophosphokinase RelA"/>
    <property type="match status" value="1"/>
</dbReference>
<dbReference type="Gene3D" id="3.10.20.30">
    <property type="match status" value="1"/>
</dbReference>
<dbReference type="Gene3D" id="3.30.70.260">
    <property type="match status" value="1"/>
</dbReference>
<dbReference type="Gene3D" id="3.30.460.10">
    <property type="entry name" value="Beta Polymerase, domain 2"/>
    <property type="match status" value="1"/>
</dbReference>
<dbReference type="Gene3D" id="1.10.3210.10">
    <property type="entry name" value="Hypothetical protein af1432"/>
    <property type="match status" value="1"/>
</dbReference>
<dbReference type="InterPro" id="IPR045865">
    <property type="entry name" value="ACT-like_dom_sf"/>
</dbReference>
<dbReference type="InterPro" id="IPR002912">
    <property type="entry name" value="ACT_dom"/>
</dbReference>
<dbReference type="InterPro" id="IPR012675">
    <property type="entry name" value="Beta-grasp_dom_sf"/>
</dbReference>
<dbReference type="InterPro" id="IPR003607">
    <property type="entry name" value="HD/PDEase_dom"/>
</dbReference>
<dbReference type="InterPro" id="IPR006674">
    <property type="entry name" value="HD_domain"/>
</dbReference>
<dbReference type="InterPro" id="IPR043519">
    <property type="entry name" value="NT_sf"/>
</dbReference>
<dbReference type="InterPro" id="IPR004811">
    <property type="entry name" value="RelA/Spo_fam"/>
</dbReference>
<dbReference type="InterPro" id="IPR045600">
    <property type="entry name" value="RelA/SpoT_AH_RIS"/>
</dbReference>
<dbReference type="InterPro" id="IPR007685">
    <property type="entry name" value="RelA_SpoT"/>
</dbReference>
<dbReference type="InterPro" id="IPR004095">
    <property type="entry name" value="TGS"/>
</dbReference>
<dbReference type="InterPro" id="IPR012676">
    <property type="entry name" value="TGS-like"/>
</dbReference>
<dbReference type="InterPro" id="IPR033655">
    <property type="entry name" value="TGS_RelA/SpoT"/>
</dbReference>
<dbReference type="NCBIfam" id="TIGR00691">
    <property type="entry name" value="spoT_relA"/>
    <property type="match status" value="1"/>
</dbReference>
<dbReference type="PANTHER" id="PTHR21262:SF31">
    <property type="entry name" value="GTP PYROPHOSPHOKINASE"/>
    <property type="match status" value="1"/>
</dbReference>
<dbReference type="PANTHER" id="PTHR21262">
    <property type="entry name" value="GUANOSINE-3',5'-BIS DIPHOSPHATE 3'-PYROPHOSPHOHYDROLASE"/>
    <property type="match status" value="1"/>
</dbReference>
<dbReference type="Pfam" id="PF13291">
    <property type="entry name" value="ACT_4"/>
    <property type="match status" value="1"/>
</dbReference>
<dbReference type="Pfam" id="PF13328">
    <property type="entry name" value="HD_4"/>
    <property type="match status" value="1"/>
</dbReference>
<dbReference type="Pfam" id="PF19296">
    <property type="entry name" value="RelA_AH_RIS"/>
    <property type="match status" value="1"/>
</dbReference>
<dbReference type="Pfam" id="PF04607">
    <property type="entry name" value="RelA_SpoT"/>
    <property type="match status" value="1"/>
</dbReference>
<dbReference type="Pfam" id="PF02824">
    <property type="entry name" value="TGS"/>
    <property type="match status" value="1"/>
</dbReference>
<dbReference type="SMART" id="SM00471">
    <property type="entry name" value="HDc"/>
    <property type="match status" value="1"/>
</dbReference>
<dbReference type="SMART" id="SM00954">
    <property type="entry name" value="RelA_SpoT"/>
    <property type="match status" value="1"/>
</dbReference>
<dbReference type="SUPFAM" id="SSF55021">
    <property type="entry name" value="ACT-like"/>
    <property type="match status" value="1"/>
</dbReference>
<dbReference type="SUPFAM" id="SSF109604">
    <property type="entry name" value="HD-domain/PDEase-like"/>
    <property type="match status" value="1"/>
</dbReference>
<dbReference type="SUPFAM" id="SSF81301">
    <property type="entry name" value="Nucleotidyltransferase"/>
    <property type="match status" value="1"/>
</dbReference>
<dbReference type="SUPFAM" id="SSF81271">
    <property type="entry name" value="TGS-like"/>
    <property type="match status" value="1"/>
</dbReference>
<dbReference type="PROSITE" id="PS51671">
    <property type="entry name" value="ACT"/>
    <property type="match status" value="1"/>
</dbReference>
<dbReference type="PROSITE" id="PS51831">
    <property type="entry name" value="HD"/>
    <property type="match status" value="1"/>
</dbReference>
<dbReference type="PROSITE" id="PS51880">
    <property type="entry name" value="TGS"/>
    <property type="match status" value="1"/>
</dbReference>
<organism>
    <name type="scientific">Staphylococcus epidermidis (strain ATCC 35984 / DSM 28319 / BCRC 17069 / CCUG 31568 / BM 3577 / RP62A)</name>
    <dbReference type="NCBI Taxonomy" id="176279"/>
    <lineage>
        <taxon>Bacteria</taxon>
        <taxon>Bacillati</taxon>
        <taxon>Bacillota</taxon>
        <taxon>Bacilli</taxon>
        <taxon>Bacillales</taxon>
        <taxon>Staphylococcaceae</taxon>
        <taxon>Staphylococcus</taxon>
    </lineage>
</organism>